<accession>P0AF25</accession>
<accession>P15302</accession>
<sequence length="250" mass="27163">MTIKNVICDIDGVLMHDNVAVPGAAEFLHGIMDKGLPLVLLTNYPSQTGQDLANRFATAGVDVPDSVFYTSAMATADFLRRQEGKKAYVVGEGALIHELYKAGFTITDVNPDFVIVGETRSYNWDMMHKAAYFVANGARFIATNPDTHGRGFYPACGALCAGIEKISGRKPFYVGKPSPWIIRAALNKMQAHSEETVIVGDNLRTDILAGFQAGLETILVLSGVSSLDDIDSMPFRPSWIYPSVAEIDVI</sequence>
<organism>
    <name type="scientific">Escherichia coli O157:H7</name>
    <dbReference type="NCBI Taxonomy" id="83334"/>
    <lineage>
        <taxon>Bacteria</taxon>
        <taxon>Pseudomonadati</taxon>
        <taxon>Pseudomonadota</taxon>
        <taxon>Gammaproteobacteria</taxon>
        <taxon>Enterobacterales</taxon>
        <taxon>Enterobacteriaceae</taxon>
        <taxon>Escherichia</taxon>
    </lineage>
</organism>
<proteinExistence type="inferred from homology"/>
<evidence type="ECO:0000250" key="1"/>
<evidence type="ECO:0000305" key="2"/>
<protein>
    <recommendedName>
        <fullName>Ribonucleotide monophosphatase NagD</fullName>
        <ecNumber>3.1.3.5</ecNumber>
    </recommendedName>
</protein>
<feature type="chain" id="PRO_0000096695" description="Ribonucleotide monophosphatase NagD">
    <location>
        <begin position="1"/>
        <end position="250"/>
    </location>
</feature>
<feature type="active site" evidence="1">
    <location>
        <position position="11"/>
    </location>
</feature>
<feature type="binding site" evidence="1">
    <location>
        <position position="9"/>
    </location>
    <ligand>
        <name>Mg(2+)</name>
        <dbReference type="ChEBI" id="CHEBI:18420"/>
    </ligand>
</feature>
<feature type="binding site" evidence="1">
    <location>
        <position position="11"/>
    </location>
    <ligand>
        <name>Mg(2+)</name>
        <dbReference type="ChEBI" id="CHEBI:18420"/>
    </ligand>
</feature>
<feature type="binding site" evidence="1">
    <location>
        <position position="11"/>
    </location>
    <ligand>
        <name>substrate</name>
    </ligand>
</feature>
<feature type="binding site" evidence="1">
    <location>
        <begin position="42"/>
        <end position="43"/>
    </location>
    <ligand>
        <name>substrate</name>
    </ligand>
</feature>
<feature type="binding site" evidence="1">
    <location>
        <position position="176"/>
    </location>
    <ligand>
        <name>substrate</name>
    </ligand>
</feature>
<feature type="binding site" evidence="1">
    <location>
        <position position="201"/>
    </location>
    <ligand>
        <name>Mg(2+)</name>
        <dbReference type="ChEBI" id="CHEBI:18420"/>
    </ligand>
</feature>
<feature type="binding site" evidence="1">
    <location>
        <begin position="202"/>
        <end position="205"/>
    </location>
    <ligand>
        <name>substrate</name>
    </ligand>
</feature>
<feature type="site" description="Orients the Asp-11 for proton transfer during catalytic turnover" evidence="1">
    <location>
        <position position="55"/>
    </location>
</feature>
<feature type="site" description="Confers substrate specificity" evidence="1">
    <location>
        <position position="146"/>
    </location>
</feature>
<reference key="1">
    <citation type="journal article" date="2001" name="Nature">
        <title>Genome sequence of enterohaemorrhagic Escherichia coli O157:H7.</title>
        <authorList>
            <person name="Perna N.T."/>
            <person name="Plunkett G. III"/>
            <person name="Burland V."/>
            <person name="Mau B."/>
            <person name="Glasner J.D."/>
            <person name="Rose D.J."/>
            <person name="Mayhew G.F."/>
            <person name="Evans P.S."/>
            <person name="Gregor J."/>
            <person name="Kirkpatrick H.A."/>
            <person name="Posfai G."/>
            <person name="Hackett J."/>
            <person name="Klink S."/>
            <person name="Boutin A."/>
            <person name="Shao Y."/>
            <person name="Miller L."/>
            <person name="Grotbeck E.J."/>
            <person name="Davis N.W."/>
            <person name="Lim A."/>
            <person name="Dimalanta E.T."/>
            <person name="Potamousis K."/>
            <person name="Apodaca J."/>
            <person name="Anantharaman T.S."/>
            <person name="Lin J."/>
            <person name="Yen G."/>
            <person name="Schwartz D.C."/>
            <person name="Welch R.A."/>
            <person name="Blattner F.R."/>
        </authorList>
    </citation>
    <scope>NUCLEOTIDE SEQUENCE [LARGE SCALE GENOMIC DNA]</scope>
    <source>
        <strain>O157:H7 / EDL933 / ATCC 700927 / EHEC</strain>
    </source>
</reference>
<reference key="2">
    <citation type="journal article" date="2001" name="DNA Res.">
        <title>Complete genome sequence of enterohemorrhagic Escherichia coli O157:H7 and genomic comparison with a laboratory strain K-12.</title>
        <authorList>
            <person name="Hayashi T."/>
            <person name="Makino K."/>
            <person name="Ohnishi M."/>
            <person name="Kurokawa K."/>
            <person name="Ishii K."/>
            <person name="Yokoyama K."/>
            <person name="Han C.-G."/>
            <person name="Ohtsubo E."/>
            <person name="Nakayama K."/>
            <person name="Murata T."/>
            <person name="Tanaka M."/>
            <person name="Tobe T."/>
            <person name="Iida T."/>
            <person name="Takami H."/>
            <person name="Honda T."/>
            <person name="Sasakawa C."/>
            <person name="Ogasawara N."/>
            <person name="Yasunaga T."/>
            <person name="Kuhara S."/>
            <person name="Shiba T."/>
            <person name="Hattori M."/>
            <person name="Shinagawa H."/>
        </authorList>
    </citation>
    <scope>NUCLEOTIDE SEQUENCE [LARGE SCALE GENOMIC DNA]</scope>
    <source>
        <strain>O157:H7 / Sakai / RIMD 0509952 / EHEC</strain>
    </source>
</reference>
<dbReference type="EC" id="3.1.3.5"/>
<dbReference type="EMBL" id="AE005174">
    <property type="protein sequence ID" value="AAG54997.1"/>
    <property type="molecule type" value="Genomic_DNA"/>
</dbReference>
<dbReference type="EMBL" id="BA000007">
    <property type="protein sequence ID" value="BAB34128.1"/>
    <property type="molecule type" value="Genomic_DNA"/>
</dbReference>
<dbReference type="PIR" id="A85567">
    <property type="entry name" value="A85567"/>
</dbReference>
<dbReference type="PIR" id="A90717">
    <property type="entry name" value="A90717"/>
</dbReference>
<dbReference type="RefSeq" id="WP_000153129.1">
    <property type="nucleotide sequence ID" value="NZ_VOAI01000012.1"/>
</dbReference>
<dbReference type="SMR" id="P0AF25"/>
<dbReference type="STRING" id="155864.Z0822"/>
<dbReference type="GeneID" id="93776810"/>
<dbReference type="KEGG" id="ece:Z0822"/>
<dbReference type="KEGG" id="ecs:ECs_0705"/>
<dbReference type="PATRIC" id="fig|386585.9.peg.817"/>
<dbReference type="eggNOG" id="COG0647">
    <property type="taxonomic scope" value="Bacteria"/>
</dbReference>
<dbReference type="HOGENOM" id="CLU_043473_1_1_6"/>
<dbReference type="OMA" id="PPMHRET"/>
<dbReference type="Proteomes" id="UP000000558">
    <property type="component" value="Chromosome"/>
</dbReference>
<dbReference type="Proteomes" id="UP000002519">
    <property type="component" value="Chromosome"/>
</dbReference>
<dbReference type="GO" id="GO:0005737">
    <property type="term" value="C:cytoplasm"/>
    <property type="evidence" value="ECO:0007669"/>
    <property type="project" value="TreeGrafter"/>
</dbReference>
<dbReference type="GO" id="GO:0008253">
    <property type="term" value="F:5'-nucleotidase activity"/>
    <property type="evidence" value="ECO:0000250"/>
    <property type="project" value="UniProtKB"/>
</dbReference>
<dbReference type="GO" id="GO:0000287">
    <property type="term" value="F:magnesium ion binding"/>
    <property type="evidence" value="ECO:0000250"/>
    <property type="project" value="UniProtKB"/>
</dbReference>
<dbReference type="CDD" id="cd07530">
    <property type="entry name" value="HAD_Pase_UmpH-like"/>
    <property type="match status" value="1"/>
</dbReference>
<dbReference type="FunFam" id="3.40.50.1000:FF:000016">
    <property type="entry name" value="HAD family hydrolase"/>
    <property type="match status" value="1"/>
</dbReference>
<dbReference type="Gene3D" id="3.40.50.1000">
    <property type="entry name" value="HAD superfamily/HAD-like"/>
    <property type="match status" value="2"/>
</dbReference>
<dbReference type="InterPro" id="IPR036412">
    <property type="entry name" value="HAD-like_sf"/>
</dbReference>
<dbReference type="InterPro" id="IPR006357">
    <property type="entry name" value="HAD-SF_hydro_IIA"/>
</dbReference>
<dbReference type="InterPro" id="IPR023214">
    <property type="entry name" value="HAD_sf"/>
</dbReference>
<dbReference type="NCBIfam" id="TIGR01460">
    <property type="entry name" value="HAD-SF-IIA"/>
    <property type="match status" value="1"/>
</dbReference>
<dbReference type="NCBIfam" id="NF007762">
    <property type="entry name" value="PRK10444.1"/>
    <property type="match status" value="1"/>
</dbReference>
<dbReference type="PANTHER" id="PTHR19288">
    <property type="entry name" value="4-NITROPHENYLPHOSPHATASE-RELATED"/>
    <property type="match status" value="1"/>
</dbReference>
<dbReference type="PANTHER" id="PTHR19288:SF46">
    <property type="entry name" value="HALOACID DEHALOGENASE-LIKE HYDROLASE DOMAIN-CONTAINING PROTEIN 2"/>
    <property type="match status" value="1"/>
</dbReference>
<dbReference type="Pfam" id="PF13344">
    <property type="entry name" value="Hydrolase_6"/>
    <property type="match status" value="1"/>
</dbReference>
<dbReference type="Pfam" id="PF13242">
    <property type="entry name" value="Hydrolase_like"/>
    <property type="match status" value="1"/>
</dbReference>
<dbReference type="SFLD" id="SFLDG01139">
    <property type="entry name" value="C2.A:_Pyridoxal_Phosphate_Phos"/>
    <property type="match status" value="1"/>
</dbReference>
<dbReference type="SFLD" id="SFLDS00003">
    <property type="entry name" value="Haloacid_Dehalogenase"/>
    <property type="match status" value="1"/>
</dbReference>
<dbReference type="SUPFAM" id="SSF56784">
    <property type="entry name" value="HAD-like"/>
    <property type="match status" value="1"/>
</dbReference>
<gene>
    <name type="primary">nagD</name>
    <name type="ordered locus">Z0822</name>
    <name type="ordered locus">ECs0705</name>
</gene>
<keyword id="KW-0119">Carbohydrate metabolism</keyword>
<keyword id="KW-0378">Hydrolase</keyword>
<keyword id="KW-0460">Magnesium</keyword>
<keyword id="KW-0479">Metal-binding</keyword>
<keyword id="KW-1185">Reference proteome</keyword>
<name>NAGD_ECO57</name>
<comment type="function">
    <text evidence="1">Catalyzes the dephosphorylation of an unusually broad range of substrate including deoxyribo- and ribonucleoside tri-, di-, and monophosphates, as well as polyphosphate and glucose-1-P (Glu1P).</text>
</comment>
<comment type="catalytic activity">
    <reaction>
        <text>a ribonucleoside 5'-phosphate + H2O = a ribonucleoside + phosphate</text>
        <dbReference type="Rhea" id="RHEA:12484"/>
        <dbReference type="ChEBI" id="CHEBI:15377"/>
        <dbReference type="ChEBI" id="CHEBI:18254"/>
        <dbReference type="ChEBI" id="CHEBI:43474"/>
        <dbReference type="ChEBI" id="CHEBI:58043"/>
        <dbReference type="EC" id="3.1.3.5"/>
    </reaction>
</comment>
<comment type="cofactor">
    <cofactor evidence="1">
        <name>Mg(2+)</name>
        <dbReference type="ChEBI" id="CHEBI:18420"/>
    </cofactor>
    <cofactor evidence="1">
        <name>Mn(2+)</name>
        <dbReference type="ChEBI" id="CHEBI:29035"/>
    </cofactor>
    <cofactor evidence="1">
        <name>Co(2+)</name>
        <dbReference type="ChEBI" id="CHEBI:48828"/>
    </cofactor>
    <cofactor evidence="1">
        <name>Zn(2+)</name>
        <dbReference type="ChEBI" id="CHEBI:29105"/>
    </cofactor>
    <text evidence="1">Magnesium. Can also use other divalent metal cations as manganese, cobalt or zinc.</text>
</comment>
<comment type="subunit">
    <text evidence="1">Monomer.</text>
</comment>
<comment type="induction">
    <text evidence="2">By N-acetylglucosamine.</text>
</comment>
<comment type="similarity">
    <text evidence="2">Belongs to the HAD-like hydrolase superfamily. NagD family.</text>
</comment>